<name>CB23_HORVU</name>
<dbReference type="EMBL" id="X63197">
    <property type="protein sequence ID" value="CAA44881.1"/>
    <property type="molecule type" value="mRNA"/>
</dbReference>
<dbReference type="PIR" id="S22482">
    <property type="entry name" value="CDBH3"/>
</dbReference>
<dbReference type="SMR" id="P27523"/>
<dbReference type="ExpressionAtlas" id="P27523">
    <property type="expression patterns" value="baseline and differential"/>
</dbReference>
<dbReference type="GO" id="GO:0009535">
    <property type="term" value="C:chloroplast thylakoid membrane"/>
    <property type="evidence" value="ECO:0007669"/>
    <property type="project" value="UniProtKB-SubCell"/>
</dbReference>
<dbReference type="GO" id="GO:0009522">
    <property type="term" value="C:photosystem I"/>
    <property type="evidence" value="ECO:0007669"/>
    <property type="project" value="UniProtKB-KW"/>
</dbReference>
<dbReference type="GO" id="GO:0009523">
    <property type="term" value="C:photosystem II"/>
    <property type="evidence" value="ECO:0007669"/>
    <property type="project" value="UniProtKB-KW"/>
</dbReference>
<dbReference type="GO" id="GO:0016168">
    <property type="term" value="F:chlorophyll binding"/>
    <property type="evidence" value="ECO:0007669"/>
    <property type="project" value="UniProtKB-KW"/>
</dbReference>
<dbReference type="GO" id="GO:0046872">
    <property type="term" value="F:metal ion binding"/>
    <property type="evidence" value="ECO:0007669"/>
    <property type="project" value="UniProtKB-KW"/>
</dbReference>
<dbReference type="GO" id="GO:0009765">
    <property type="term" value="P:photosynthesis, light harvesting"/>
    <property type="evidence" value="ECO:0007669"/>
    <property type="project" value="InterPro"/>
</dbReference>
<dbReference type="FunFam" id="1.10.3460.10:FF:000001">
    <property type="entry name" value="Chlorophyll a-b binding protein, chloroplastic"/>
    <property type="match status" value="1"/>
</dbReference>
<dbReference type="Gene3D" id="1.10.3460.10">
    <property type="entry name" value="Chlorophyll a/b binding protein domain"/>
    <property type="match status" value="1"/>
</dbReference>
<dbReference type="InterPro" id="IPR001344">
    <property type="entry name" value="Chloro_AB-bd_pln"/>
</dbReference>
<dbReference type="InterPro" id="IPR022796">
    <property type="entry name" value="Chloroa_b-bind"/>
</dbReference>
<dbReference type="PANTHER" id="PTHR21649">
    <property type="entry name" value="CHLOROPHYLL A/B BINDING PROTEIN"/>
    <property type="match status" value="1"/>
</dbReference>
<dbReference type="Pfam" id="PF00504">
    <property type="entry name" value="Chloroa_b-bind"/>
    <property type="match status" value="1"/>
</dbReference>
<dbReference type="SUPFAM" id="SSF103511">
    <property type="entry name" value="Chlorophyll a-b binding protein"/>
    <property type="match status" value="1"/>
</dbReference>
<reference key="1">
    <citation type="journal article" date="1992" name="Plant Mol. Biol.">
        <title>A barley cDNA clone encoding a type III chlorophyll a/b-binding polypeptide of the light-harvesting complex II.</title>
        <authorList>
            <person name="Brandt J."/>
            <person name="Nielsen V.S."/>
            <person name="Thordal-Christensen H."/>
            <person name="Simpson D.J."/>
            <person name="Okkels J.S."/>
        </authorList>
    </citation>
    <scope>NUCLEOTIDE SEQUENCE [MRNA]</scope>
    <source>
        <strain>cv. Pallas / P-01</strain>
    </source>
</reference>
<protein>
    <recommendedName>
        <fullName>Chlorophyll a-b binding protein of LHCII type III, chloroplastic</fullName>
        <shortName>CAB</shortName>
    </recommendedName>
</protein>
<comment type="function">
    <text>The light-harvesting complex (LHC) functions as a light receptor, it captures and delivers excitation energy to photosystems with which it is closely associated.</text>
</comment>
<comment type="cofactor">
    <text evidence="1">Binds at least 14 chlorophylls (8 Chl-a and 6 Chl-b) and carotenoids such as lutein and neoxanthin.</text>
</comment>
<comment type="subunit">
    <text>The LHC complex consists of chlorophyll a-b binding proteins.</text>
</comment>
<comment type="subcellular location">
    <subcellularLocation>
        <location>Plastid</location>
        <location>Chloroplast thylakoid membrane</location>
        <topology>Multi-pass membrane protein</topology>
    </subcellularLocation>
</comment>
<comment type="domain">
    <text>The N-terminus of the protein extends into the stroma where it is involved with adhesion of granal membranes and post-translational modifications; both are believed to mediate the distribution of excitation energy between photosystems I and II.</text>
</comment>
<comment type="PTM">
    <text evidence="1">Photoregulated by reversible phosphorylation of its threonine residues.</text>
</comment>
<comment type="similarity">
    <text evidence="5">Belongs to the light-harvesting chlorophyll a/b-binding (LHC) protein family.</text>
</comment>
<proteinExistence type="evidence at transcript level"/>
<accession>P27523</accession>
<sequence>MASTIMAAASRAVVAKTPFLSGQGRAASASPLRDIAAATNGRITMGNDLWYGPDRVKYLGPFSAQTPSYLNGEFPGDYGWDTAGLSADPEAFARNRALEVIHGRWAMLGALGCVFPEVLQKWVGVEFKEPVWFKAGSQIFSEGGLDYLGNPNLVHAQSILAVLGFQVLLMGLVEGFRINGLDGVGEGNDLYPGGQYFDPLGLADDPVTFAELKVKEIKNGRLAMFSMFGFFVQAIVTGKGPLENLFDHLDDPVANNAWVFATKFAPGS</sequence>
<evidence type="ECO:0000250" key="1"/>
<evidence type="ECO:0000250" key="2">
    <source>
        <dbReference type="UniProtKB" id="P07371"/>
    </source>
</evidence>
<evidence type="ECO:0000250" key="3">
    <source>
        <dbReference type="UniProtKB" id="P12333"/>
    </source>
</evidence>
<evidence type="ECO:0000255" key="4"/>
<evidence type="ECO:0000305" key="5"/>
<organism>
    <name type="scientific">Hordeum vulgare</name>
    <name type="common">Barley</name>
    <dbReference type="NCBI Taxonomy" id="4513"/>
    <lineage>
        <taxon>Eukaryota</taxon>
        <taxon>Viridiplantae</taxon>
        <taxon>Streptophyta</taxon>
        <taxon>Embryophyta</taxon>
        <taxon>Tracheophyta</taxon>
        <taxon>Spermatophyta</taxon>
        <taxon>Magnoliopsida</taxon>
        <taxon>Liliopsida</taxon>
        <taxon>Poales</taxon>
        <taxon>Poaceae</taxon>
        <taxon>BOP clade</taxon>
        <taxon>Pooideae</taxon>
        <taxon>Triticodae</taxon>
        <taxon>Triticeae</taxon>
        <taxon>Hordeinae</taxon>
        <taxon>Hordeum</taxon>
    </lineage>
</organism>
<gene>
    <name type="primary">LHBC</name>
</gene>
<keyword id="KW-0148">Chlorophyll</keyword>
<keyword id="KW-0150">Chloroplast</keyword>
<keyword id="KW-0157">Chromophore</keyword>
<keyword id="KW-0460">Magnesium</keyword>
<keyword id="KW-0472">Membrane</keyword>
<keyword id="KW-0479">Metal-binding</keyword>
<keyword id="KW-0597">Phosphoprotein</keyword>
<keyword id="KW-0602">Photosynthesis</keyword>
<keyword id="KW-0603">Photosystem I</keyword>
<keyword id="KW-0604">Photosystem II</keyword>
<keyword id="KW-0934">Plastid</keyword>
<keyword id="KW-0793">Thylakoid</keyword>
<keyword id="KW-0809">Transit peptide</keyword>
<keyword id="KW-0812">Transmembrane</keyword>
<keyword id="KW-1133">Transmembrane helix</keyword>
<feature type="transit peptide" description="Chloroplast" evidence="4">
    <location>
        <begin position="1"/>
        <end position="45"/>
    </location>
</feature>
<feature type="chain" id="PRO_0000003708" description="Chlorophyll a-b binding protein of LHCII type III, chloroplastic">
    <location>
        <begin position="46"/>
        <end position="268"/>
    </location>
</feature>
<feature type="transmembrane region" description="Helical" evidence="4">
    <location>
        <begin position="105"/>
        <end position="125"/>
    </location>
</feature>
<feature type="transmembrane region" description="Helical" evidence="4">
    <location>
        <begin position="153"/>
        <end position="173"/>
    </location>
</feature>
<feature type="transmembrane region" description="Helical" evidence="4">
    <location>
        <begin position="222"/>
        <end position="242"/>
    </location>
</feature>
<feature type="binding site" description="axial binding residue" evidence="3">
    <location>
        <position position="58"/>
    </location>
    <ligand>
        <name>chlorophyll b</name>
        <dbReference type="ChEBI" id="CHEBI:61721"/>
        <label>1</label>
    </ligand>
    <ligandPart>
        <name>Mg</name>
        <dbReference type="ChEBI" id="CHEBI:25107"/>
    </ligandPart>
</feature>
<feature type="binding site" evidence="1">
    <location>
        <position position="80"/>
    </location>
    <ligand>
        <name>chlorophyll a</name>
        <dbReference type="ChEBI" id="CHEBI:58416"/>
        <label>1</label>
    </ligand>
</feature>
<feature type="binding site" evidence="1">
    <location>
        <position position="86"/>
    </location>
    <ligand>
        <name>chlorophyll a</name>
        <dbReference type="ChEBI" id="CHEBI:58416"/>
        <label>1</label>
    </ligand>
</feature>
<feature type="binding site" description="axial binding residue" evidence="3">
    <location>
        <position position="99"/>
    </location>
    <ligand>
        <name>chlorophyll a</name>
        <dbReference type="ChEBI" id="CHEBI:58416"/>
        <label>1</label>
    </ligand>
    <ligandPart>
        <name>Mg</name>
        <dbReference type="ChEBI" id="CHEBI:25107"/>
    </ligandPart>
</feature>
<feature type="binding site" description="axial binding residue" evidence="3">
    <location>
        <position position="102"/>
    </location>
    <ligand>
        <name>chlorophyll a</name>
        <dbReference type="ChEBI" id="CHEBI:58416"/>
        <label>2</label>
    </ligand>
    <ligandPart>
        <name>Mg</name>
        <dbReference type="ChEBI" id="CHEBI:25107"/>
    </ligandPart>
</feature>
<feature type="binding site" evidence="1">
    <location>
        <position position="104"/>
    </location>
    <ligand>
        <name>chlorophyll b</name>
        <dbReference type="ChEBI" id="CHEBI:61721"/>
        <label>2</label>
    </ligand>
</feature>
<feature type="binding site" evidence="1">
    <location>
        <position position="138"/>
    </location>
    <ligand>
        <name>chlorophyll a</name>
        <dbReference type="ChEBI" id="CHEBI:58416"/>
        <label>3</label>
    </ligand>
</feature>
<feature type="binding site" evidence="1">
    <location>
        <position position="148"/>
    </location>
    <ligand>
        <name>chlorophyll a</name>
        <dbReference type="ChEBI" id="CHEBI:58416"/>
        <label>3</label>
    </ligand>
</feature>
<feature type="binding site" description="axial binding residue" evidence="3">
    <location>
        <position position="154"/>
    </location>
    <ligand>
        <name>chlorophyll b</name>
        <dbReference type="ChEBI" id="CHEBI:61721"/>
        <label>2</label>
    </ligand>
    <ligandPart>
        <name>Mg</name>
        <dbReference type="ChEBI" id="CHEBI:25107"/>
    </ligandPart>
</feature>
<feature type="binding site" evidence="1">
    <location>
        <position position="158"/>
    </location>
    <ligand>
        <name>chlorophyll b</name>
        <dbReference type="ChEBI" id="CHEBI:61721"/>
        <label>3</label>
    </ligand>
</feature>
<feature type="binding site" evidence="1">
    <location>
        <position position="166"/>
    </location>
    <ligand>
        <name>chlorophyll b</name>
        <dbReference type="ChEBI" id="CHEBI:61721"/>
        <label>4</label>
    </ligand>
</feature>
<feature type="binding site" evidence="2">
    <location>
        <position position="166"/>
    </location>
    <ligand>
        <name>chlorophyll b</name>
        <dbReference type="ChEBI" id="CHEBI:61721"/>
        <label>5</label>
    </ligand>
</feature>
<feature type="binding site" description="axial binding residue" evidence="3">
    <location>
        <position position="174"/>
    </location>
    <ligand>
        <name>chlorophyll b</name>
        <dbReference type="ChEBI" id="CHEBI:61721"/>
        <label>3</label>
    </ligand>
    <ligandPart>
        <name>Mg</name>
        <dbReference type="ChEBI" id="CHEBI:25107"/>
    </ligandPart>
</feature>
<feature type="binding site" evidence="1">
    <location>
        <position position="177"/>
    </location>
    <ligand>
        <name>chlorophyll b</name>
        <dbReference type="ChEBI" id="CHEBI:61721"/>
        <label>4</label>
    </ligand>
</feature>
<feature type="binding site" evidence="1">
    <location>
        <position position="215"/>
    </location>
    <ligand>
        <name>chlorophyll a</name>
        <dbReference type="ChEBI" id="CHEBI:58416"/>
        <label>5</label>
    </ligand>
</feature>
<feature type="binding site" description="axial binding residue" evidence="3">
    <location>
        <position position="216"/>
    </location>
    <ligand>
        <name>chlorophyll a</name>
        <dbReference type="ChEBI" id="CHEBI:58416"/>
        <label>3</label>
    </ligand>
    <ligandPart>
        <name>Mg</name>
        <dbReference type="ChEBI" id="CHEBI:25107"/>
    </ligandPart>
</feature>
<feature type="binding site" description="axial binding residue" evidence="3">
    <location>
        <position position="219"/>
    </location>
    <ligand>
        <name>chlorophyll a</name>
        <dbReference type="ChEBI" id="CHEBI:58416"/>
        <label>4</label>
    </ligand>
    <ligandPart>
        <name>Mg</name>
        <dbReference type="ChEBI" id="CHEBI:25107"/>
    </ligandPart>
</feature>
<feature type="binding site" evidence="1">
    <location>
        <position position="221"/>
    </location>
    <ligand>
        <name>chlorophyll a</name>
        <dbReference type="ChEBI" id="CHEBI:58416"/>
        <label>1</label>
    </ligand>
</feature>
<feature type="binding site" description="axial binding residue" evidence="3">
    <location>
        <position position="233"/>
    </location>
    <ligand>
        <name>chlorophyll a</name>
        <dbReference type="ChEBI" id="CHEBI:58416"/>
        <label>5</label>
    </ligand>
    <ligandPart>
        <name>Mg</name>
        <dbReference type="ChEBI" id="CHEBI:25107"/>
    </ligandPart>
</feature>
<feature type="binding site" description="axial binding residue" evidence="3">
    <location>
        <position position="248"/>
    </location>
    <ligand>
        <name>chlorophyll a</name>
        <dbReference type="ChEBI" id="CHEBI:58416"/>
        <label>6</label>
    </ligand>
    <ligandPart>
        <name>Mg</name>
        <dbReference type="ChEBI" id="CHEBI:25107"/>
    </ligandPart>
</feature>
<feature type="binding site" evidence="1">
    <location>
        <position position="257"/>
    </location>
    <ligand>
        <name>chlorophyll a</name>
        <dbReference type="ChEBI" id="CHEBI:58416"/>
        <label>6</label>
    </ligand>
</feature>
<feature type="binding site" evidence="1">
    <location>
        <position position="264"/>
    </location>
    <ligand>
        <name>chlorophyll b</name>
        <dbReference type="ChEBI" id="CHEBI:61721"/>
        <label>5</label>
    </ligand>
</feature>